<protein>
    <recommendedName>
        <fullName>Exocyst complex component 6</fullName>
    </recommendedName>
    <alternativeName>
        <fullName>Exocyst complex component Sec15A</fullName>
    </alternativeName>
    <alternativeName>
        <fullName>SEC15-like protein 1</fullName>
    </alternativeName>
</protein>
<accession>E2R766</accession>
<comment type="function">
    <text evidence="1 4">Component of the exocyst complex involved in the docking of exocytic vesicles with fusion sites on the plasma membrane (By similarity). Together with RAB11A, RAB3IP, RAB8A, PARD3, PRKCI, ANXA2, CDC42 and DNMBP promotes transcytosis of PODXL to the apical membrane initiation sites (AMIS), apical surface formation and lumenogenesis.</text>
</comment>
<comment type="subunit">
    <text evidence="1 2">The exocyst complex is composed of EXOC1, EXOC2, EXOC3, EXOC4, EXOC5, EXOC6, EXOC7 and EXOC8 (By similarity). Interacts with CNTRL. Interacts with RAB11A in a GTP-dependent manner (By similarity).</text>
</comment>
<comment type="subcellular location">
    <subcellularLocation>
        <location evidence="2">Cytoplasm</location>
    </subcellularLocation>
    <subcellularLocation>
        <location evidence="2">Cytoplasm</location>
        <location evidence="2">Perinuclear region</location>
    </subcellularLocation>
    <subcellularLocation>
        <location evidence="2">Cell projection</location>
        <location evidence="2">Growth cone</location>
    </subcellularLocation>
    <subcellularLocation>
        <location evidence="3">Midbody</location>
        <location evidence="3">Midbody ring</location>
    </subcellularLocation>
    <text evidence="2 3">Perinuclear in undifferentiated cells. Redistributes to growing neurites and growth cones during neuronal differentiation (By similarity). Colocalizes with CNTRL/centriolin at the midbody ring (By similarity).</text>
</comment>
<comment type="similarity">
    <text evidence="5">Belongs to the SEC15 family.</text>
</comment>
<name>EXOC6_CANLF</name>
<feature type="chain" id="PRO_0000409022" description="Exocyst complex component 6">
    <location>
        <begin position="1"/>
        <end position="803"/>
    </location>
</feature>
<reference key="1">
    <citation type="journal article" date="2005" name="Nature">
        <title>Genome sequence, comparative analysis and haplotype structure of the domestic dog.</title>
        <authorList>
            <person name="Lindblad-Toh K."/>
            <person name="Wade C.M."/>
            <person name="Mikkelsen T.S."/>
            <person name="Karlsson E.K."/>
            <person name="Jaffe D.B."/>
            <person name="Kamal M."/>
            <person name="Clamp M."/>
            <person name="Chang J.L."/>
            <person name="Kulbokas E.J. III"/>
            <person name="Zody M.C."/>
            <person name="Mauceli E."/>
            <person name="Xie X."/>
            <person name="Breen M."/>
            <person name="Wayne R.K."/>
            <person name="Ostrander E.A."/>
            <person name="Ponting C.P."/>
            <person name="Galibert F."/>
            <person name="Smith D.R."/>
            <person name="deJong P.J."/>
            <person name="Kirkness E.F."/>
            <person name="Alvarez P."/>
            <person name="Biagi T."/>
            <person name="Brockman W."/>
            <person name="Butler J."/>
            <person name="Chin C.-W."/>
            <person name="Cook A."/>
            <person name="Cuff J."/>
            <person name="Daly M.J."/>
            <person name="DeCaprio D."/>
            <person name="Gnerre S."/>
            <person name="Grabherr M."/>
            <person name="Kellis M."/>
            <person name="Kleber M."/>
            <person name="Bardeleben C."/>
            <person name="Goodstadt L."/>
            <person name="Heger A."/>
            <person name="Hitte C."/>
            <person name="Kim L."/>
            <person name="Koepfli K.-P."/>
            <person name="Parker H.G."/>
            <person name="Pollinger J.P."/>
            <person name="Searle S.M.J."/>
            <person name="Sutter N.B."/>
            <person name="Thomas R."/>
            <person name="Webber C."/>
            <person name="Baldwin J."/>
            <person name="Abebe A."/>
            <person name="Abouelleil A."/>
            <person name="Aftuck L."/>
            <person name="Ait-Zahra M."/>
            <person name="Aldredge T."/>
            <person name="Allen N."/>
            <person name="An P."/>
            <person name="Anderson S."/>
            <person name="Antoine C."/>
            <person name="Arachchi H."/>
            <person name="Aslam A."/>
            <person name="Ayotte L."/>
            <person name="Bachantsang P."/>
            <person name="Barry A."/>
            <person name="Bayul T."/>
            <person name="Benamara M."/>
            <person name="Berlin A."/>
            <person name="Bessette D."/>
            <person name="Blitshteyn B."/>
            <person name="Bloom T."/>
            <person name="Blye J."/>
            <person name="Boguslavskiy L."/>
            <person name="Bonnet C."/>
            <person name="Boukhgalter B."/>
            <person name="Brown A."/>
            <person name="Cahill P."/>
            <person name="Calixte N."/>
            <person name="Camarata J."/>
            <person name="Cheshatsang Y."/>
            <person name="Chu J."/>
            <person name="Citroen M."/>
            <person name="Collymore A."/>
            <person name="Cooke P."/>
            <person name="Dawoe T."/>
            <person name="Daza R."/>
            <person name="Decktor K."/>
            <person name="DeGray S."/>
            <person name="Dhargay N."/>
            <person name="Dooley K."/>
            <person name="Dooley K."/>
            <person name="Dorje P."/>
            <person name="Dorjee K."/>
            <person name="Dorris L."/>
            <person name="Duffey N."/>
            <person name="Dupes A."/>
            <person name="Egbiremolen O."/>
            <person name="Elong R."/>
            <person name="Falk J."/>
            <person name="Farina A."/>
            <person name="Faro S."/>
            <person name="Ferguson D."/>
            <person name="Ferreira P."/>
            <person name="Fisher S."/>
            <person name="FitzGerald M."/>
            <person name="Foley K."/>
            <person name="Foley C."/>
            <person name="Franke A."/>
            <person name="Friedrich D."/>
            <person name="Gage D."/>
            <person name="Garber M."/>
            <person name="Gearin G."/>
            <person name="Giannoukos G."/>
            <person name="Goode T."/>
            <person name="Goyette A."/>
            <person name="Graham J."/>
            <person name="Grandbois E."/>
            <person name="Gyaltsen K."/>
            <person name="Hafez N."/>
            <person name="Hagopian D."/>
            <person name="Hagos B."/>
            <person name="Hall J."/>
            <person name="Healy C."/>
            <person name="Hegarty R."/>
            <person name="Honan T."/>
            <person name="Horn A."/>
            <person name="Houde N."/>
            <person name="Hughes L."/>
            <person name="Hunnicutt L."/>
            <person name="Husby M."/>
            <person name="Jester B."/>
            <person name="Jones C."/>
            <person name="Kamat A."/>
            <person name="Kanga B."/>
            <person name="Kells C."/>
            <person name="Khazanovich D."/>
            <person name="Kieu A.C."/>
            <person name="Kisner P."/>
            <person name="Kumar M."/>
            <person name="Lance K."/>
            <person name="Landers T."/>
            <person name="Lara M."/>
            <person name="Lee W."/>
            <person name="Leger J.-P."/>
            <person name="Lennon N."/>
            <person name="Leuper L."/>
            <person name="LeVine S."/>
            <person name="Liu J."/>
            <person name="Liu X."/>
            <person name="Lokyitsang Y."/>
            <person name="Lokyitsang T."/>
            <person name="Lui A."/>
            <person name="Macdonald J."/>
            <person name="Major J."/>
            <person name="Marabella R."/>
            <person name="Maru K."/>
            <person name="Matthews C."/>
            <person name="McDonough S."/>
            <person name="Mehta T."/>
            <person name="Meldrim J."/>
            <person name="Melnikov A."/>
            <person name="Meneus L."/>
            <person name="Mihalev A."/>
            <person name="Mihova T."/>
            <person name="Miller K."/>
            <person name="Mittelman R."/>
            <person name="Mlenga V."/>
            <person name="Mulrain L."/>
            <person name="Munson G."/>
            <person name="Navidi A."/>
            <person name="Naylor J."/>
            <person name="Nguyen T."/>
            <person name="Nguyen N."/>
            <person name="Nguyen C."/>
            <person name="Nguyen T."/>
            <person name="Nicol R."/>
            <person name="Norbu N."/>
            <person name="Norbu C."/>
            <person name="Novod N."/>
            <person name="Nyima T."/>
            <person name="Olandt P."/>
            <person name="O'Neill B."/>
            <person name="O'Neill K."/>
            <person name="Osman S."/>
            <person name="Oyono L."/>
            <person name="Patti C."/>
            <person name="Perrin D."/>
            <person name="Phunkhang P."/>
            <person name="Pierre F."/>
            <person name="Priest M."/>
            <person name="Rachupka A."/>
            <person name="Raghuraman S."/>
            <person name="Rameau R."/>
            <person name="Ray V."/>
            <person name="Raymond C."/>
            <person name="Rege F."/>
            <person name="Rise C."/>
            <person name="Rogers J."/>
            <person name="Rogov P."/>
            <person name="Sahalie J."/>
            <person name="Settipalli S."/>
            <person name="Sharpe T."/>
            <person name="Shea T."/>
            <person name="Sheehan M."/>
            <person name="Sherpa N."/>
            <person name="Shi J."/>
            <person name="Shih D."/>
            <person name="Sloan J."/>
            <person name="Smith C."/>
            <person name="Sparrow T."/>
            <person name="Stalker J."/>
            <person name="Stange-Thomann N."/>
            <person name="Stavropoulos S."/>
            <person name="Stone C."/>
            <person name="Stone S."/>
            <person name="Sykes S."/>
            <person name="Tchuinga P."/>
            <person name="Tenzing P."/>
            <person name="Tesfaye S."/>
            <person name="Thoulutsang D."/>
            <person name="Thoulutsang Y."/>
            <person name="Topham K."/>
            <person name="Topping I."/>
            <person name="Tsamla T."/>
            <person name="Vassiliev H."/>
            <person name="Venkataraman V."/>
            <person name="Vo A."/>
            <person name="Wangchuk T."/>
            <person name="Wangdi T."/>
            <person name="Weiand M."/>
            <person name="Wilkinson J."/>
            <person name="Wilson A."/>
            <person name="Yadav S."/>
            <person name="Yang S."/>
            <person name="Yang X."/>
            <person name="Young G."/>
            <person name="Yu Q."/>
            <person name="Zainoun J."/>
            <person name="Zembek L."/>
            <person name="Zimmer A."/>
            <person name="Lander E.S."/>
        </authorList>
    </citation>
    <scope>NUCLEOTIDE SEQUENCE [LARGE SCALE GENOMIC DNA]</scope>
    <source>
        <strain>Boxer</strain>
    </source>
</reference>
<reference key="2">
    <citation type="journal article" date="2010" name="Nat. Cell Biol.">
        <title>A molecular network for de novo generation of the apical surface and lumen.</title>
        <authorList>
            <person name="Bryant D.M."/>
            <person name="Datta A."/>
            <person name="Rodriguez-Fraticelli A.E."/>
            <person name="Peraenen J."/>
            <person name="Martin-Belmonte F."/>
            <person name="Mostov K.E."/>
        </authorList>
    </citation>
    <scope>FUNCTION</scope>
</reference>
<gene>
    <name type="primary">EXOC6</name>
    <name type="synonym">SEC15A</name>
    <name type="synonym">SEC15L</name>
    <name type="synonym">SEC15L1</name>
</gene>
<evidence type="ECO:0000250" key="1"/>
<evidence type="ECO:0000250" key="2">
    <source>
        <dbReference type="UniProtKB" id="O54923"/>
    </source>
</evidence>
<evidence type="ECO:0000250" key="3">
    <source>
        <dbReference type="UniProtKB" id="Q8TAG9"/>
    </source>
</evidence>
<evidence type="ECO:0000269" key="4">
    <source>
    </source>
</evidence>
<evidence type="ECO:0000305" key="5"/>
<dbReference type="RefSeq" id="NP_001300715.1">
    <property type="nucleotide sequence ID" value="NM_001313786.1"/>
</dbReference>
<dbReference type="SMR" id="E2R766"/>
<dbReference type="FunCoup" id="E2R766">
    <property type="interactions" value="898"/>
</dbReference>
<dbReference type="STRING" id="9615.ENSCAFP00000011202"/>
<dbReference type="PaxDb" id="9612-ENSCAFP00000011202"/>
<dbReference type="GeneID" id="477771"/>
<dbReference type="KEGG" id="cfa:477771"/>
<dbReference type="CTD" id="54536"/>
<dbReference type="eggNOG" id="KOG2176">
    <property type="taxonomic scope" value="Eukaryota"/>
</dbReference>
<dbReference type="InParanoid" id="E2R766"/>
<dbReference type="OrthoDB" id="10267033at2759"/>
<dbReference type="Proteomes" id="UP000002254">
    <property type="component" value="Chromosome 28"/>
</dbReference>
<dbReference type="Proteomes" id="UP000694429">
    <property type="component" value="Unplaced"/>
</dbReference>
<dbReference type="Proteomes" id="UP000694542">
    <property type="component" value="Unplaced"/>
</dbReference>
<dbReference type="Proteomes" id="UP000805418">
    <property type="component" value="Unplaced"/>
</dbReference>
<dbReference type="Bgee" id="ENSCAFG00000007534">
    <property type="expression patterns" value="Expressed in granulocyte and 48 other cell types or tissues"/>
</dbReference>
<dbReference type="GO" id="GO:0000145">
    <property type="term" value="C:exocyst"/>
    <property type="evidence" value="ECO:0000318"/>
    <property type="project" value="GO_Central"/>
</dbReference>
<dbReference type="GO" id="GO:0090543">
    <property type="term" value="C:Flemming body"/>
    <property type="evidence" value="ECO:0007669"/>
    <property type="project" value="UniProtKB-SubCell"/>
</dbReference>
<dbReference type="GO" id="GO:0030426">
    <property type="term" value="C:growth cone"/>
    <property type="evidence" value="ECO:0007669"/>
    <property type="project" value="UniProtKB-SubCell"/>
</dbReference>
<dbReference type="GO" id="GO:0048471">
    <property type="term" value="C:perinuclear region of cytoplasm"/>
    <property type="evidence" value="ECO:0007669"/>
    <property type="project" value="UniProtKB-SubCell"/>
</dbReference>
<dbReference type="GO" id="GO:0006887">
    <property type="term" value="P:exocytosis"/>
    <property type="evidence" value="ECO:0000318"/>
    <property type="project" value="GO_Central"/>
</dbReference>
<dbReference type="GO" id="GO:0006893">
    <property type="term" value="P:Golgi to plasma membrane transport"/>
    <property type="evidence" value="ECO:0000318"/>
    <property type="project" value="GO_Central"/>
</dbReference>
<dbReference type="GO" id="GO:0006886">
    <property type="term" value="P:intracellular protein transport"/>
    <property type="evidence" value="ECO:0007669"/>
    <property type="project" value="InterPro"/>
</dbReference>
<dbReference type="GO" id="GO:0090522">
    <property type="term" value="P:vesicle tethering involved in exocytosis"/>
    <property type="evidence" value="ECO:0007669"/>
    <property type="project" value="InterPro"/>
</dbReference>
<dbReference type="FunFam" id="1.10.357.30:FF:000001">
    <property type="entry name" value="Exocyst complex component"/>
    <property type="match status" value="1"/>
</dbReference>
<dbReference type="FunFam" id="1.20.58.670:FF:000001">
    <property type="entry name" value="Exocyst complex component"/>
    <property type="match status" value="1"/>
</dbReference>
<dbReference type="Gene3D" id="1.20.58.670">
    <property type="entry name" value="Dsl1p vesicle tethering complex, Tip20p subunit, domain D"/>
    <property type="match status" value="1"/>
</dbReference>
<dbReference type="Gene3D" id="1.10.357.30">
    <property type="entry name" value="Exocyst complex subunit Sec15 C-terminal domain, N-terminal subdomain"/>
    <property type="match status" value="1"/>
</dbReference>
<dbReference type="InterPro" id="IPR007225">
    <property type="entry name" value="EXOC6/Sec15"/>
</dbReference>
<dbReference type="InterPro" id="IPR046361">
    <property type="entry name" value="EXOC6/Sec15_C"/>
</dbReference>
<dbReference type="InterPro" id="IPR042045">
    <property type="entry name" value="EXOC6/Sec15_C_dom1"/>
</dbReference>
<dbReference type="InterPro" id="IPR048359">
    <property type="entry name" value="EXOC6_Sec15_N"/>
</dbReference>
<dbReference type="InterPro" id="IPR042044">
    <property type="entry name" value="EXOC6PINT-1/Sec15/Tip20_C_dom2"/>
</dbReference>
<dbReference type="PANTHER" id="PTHR12702:SF2">
    <property type="entry name" value="EXOCYST COMPLEX COMPONENT 6"/>
    <property type="match status" value="1"/>
</dbReference>
<dbReference type="PANTHER" id="PTHR12702">
    <property type="entry name" value="SEC15"/>
    <property type="match status" value="1"/>
</dbReference>
<dbReference type="Pfam" id="PF20651">
    <property type="entry name" value="EXOC6_Sec15_N"/>
    <property type="match status" value="1"/>
</dbReference>
<dbReference type="Pfam" id="PF04091">
    <property type="entry name" value="Sec15_C"/>
    <property type="match status" value="1"/>
</dbReference>
<dbReference type="PIRSF" id="PIRSF025007">
    <property type="entry name" value="Sec15"/>
    <property type="match status" value="1"/>
</dbReference>
<sequence>MAENSEGLGTVPEHERILQEIESTDTACVGPTLRSVYDDQPNAHKKFMEKLDACIRNHDKEIEKMCNFHHQGFVDAITELLKVRTDAEKLKVQVTDTNRRFQDAGKEVIIQTEDIIRCRIQQRNITTVVENLQYAFPVLEMYSKLKEQMTAKRYYSALKTMEQLENVYFPRVSQYRFCQLMIENLPKLREDIKEISMSDLKDFLESIRKHSDKIGETAMKQAQQQKTFSVALQKQNNVKFGKNMYINDRIPEERKENELKQGFEEEDENEEEILTVQDLVDFSPVYRCLHIYSVLGDEETFENYYRKQRKKQARLVLQPQSNMHETVDGYRRYFTQIVGFFVVEDHILHVTQGLVTRAYTDELWNMALSKIIAVLRAHSSYCTDPDLVLELKNLIVIFADTLQGYGFPVNRLFDLLFEIRDQYNETLLKKWAGVFRDIFEEDNYSPIPIVNEEEYKAVISKFPFQDPDFEKQSFPKKFPMSQSVPHIYIQVKEFIYASLKFSESLHRSSTEIDDMLRKSTNLLLTRTLSSCLLNLIRKPHIGLTELVQIIINTTHLEQACKYLEDFITNITNISQETVHTTRLYGLSTFKDARHAAEGEIYTKLNQKIDEFVQLADYDWTMSEPDGRASGYLMDLINFLRSIFQVFTHLPGKVAQTACMSACQHLSTSLMQMLLDSELKQISMGAVQQFNLDVIQCELFASSEPVPGFQGDTLQLAFIDLRQLLDLFMVWDWSTYLADYGQPASKYLRVNPNTALTLLEKMKDTSKKNNIFAQFRKNDRDKQKLIETVVKQLRSLVNGMSQHT</sequence>
<organism>
    <name type="scientific">Canis lupus familiaris</name>
    <name type="common">Dog</name>
    <name type="synonym">Canis familiaris</name>
    <dbReference type="NCBI Taxonomy" id="9615"/>
    <lineage>
        <taxon>Eukaryota</taxon>
        <taxon>Metazoa</taxon>
        <taxon>Chordata</taxon>
        <taxon>Craniata</taxon>
        <taxon>Vertebrata</taxon>
        <taxon>Euteleostomi</taxon>
        <taxon>Mammalia</taxon>
        <taxon>Eutheria</taxon>
        <taxon>Laurasiatheria</taxon>
        <taxon>Carnivora</taxon>
        <taxon>Caniformia</taxon>
        <taxon>Canidae</taxon>
        <taxon>Canis</taxon>
    </lineage>
</organism>
<keyword id="KW-0966">Cell projection</keyword>
<keyword id="KW-0963">Cytoplasm</keyword>
<keyword id="KW-0268">Exocytosis</keyword>
<keyword id="KW-0653">Protein transport</keyword>
<keyword id="KW-1185">Reference proteome</keyword>
<keyword id="KW-0813">Transport</keyword>
<proteinExistence type="inferred from homology"/>